<comment type="function">
    <text evidence="3 4">Subunit alpha, of the mitochondrial membrane ATP synthase complex (F(1)F(0) ATP synthase or Complex V) that produces ATP from ADP in the presence of a proton gradient across the membrane which is generated by electron transport complexes of the respiratory chain. ATP synthase complex consist of a soluble F(1) head domain - the catalytic core - and a membrane F(1) domain - the membrane proton channel. These two domains are linked by a central stalk rotating inside the F(1) region and a stationary peripheral stalk. During catalysis, ATP synthesis in the catalytic domain of F(1) is coupled via a rotary mechanism of the central stalk subunits to proton translocation (By similarity). In vivo, can only synthesize ATP although its ATP hydrolase activity can be activated artificially in vitro (By similarity). With the catalytic subunit beta (ATP5F1B), forms the catalytic core in the F(1) domain. Subunit alpha does not bear the catalytic high-affinity ATP-binding sites (By similarity).</text>
</comment>
<comment type="subunit">
    <text evidence="2 4 5 6">Homotrimer. Component of the ATP synthase complex composed at least of ATP5F1A/subunit alpha, ATP5F1B/subunit beta, ATP5MC1/subunit c (homooctomer), MT-ATP6/subunit a, MT-ATP8/subunit 8, ATP5ME/subunit e, ATP5MF/subunit f, ATP5MG/subunit g, ATP5MK/subunit k, ATP5MJ/subunit j, ATP5F1C/subunit gamma, ATP5F1D/subunit delta, ATP5F1E/subunit epsilon, ATP5PF/subunit F6, ATP5PB/subunit b, ATP5PD/subunit d, ATP5PO/subunit OSCP. ATP synthase complex consists of a soluble F(1) head domain (subunits alpha(3) and beta(3)) - the catalytic core - and a membrane F(0) domain - the membrane proton channel (subunits c, a, 8, e, f, g, k and j). These two domains are linked by a central stalk (subunits gamma, delta, and epsilon) rotating inside the F1 region and a stationary peripheral stalk (subunits F6, b, d, and OSCP). Interacts with ATPAF2. Interacts with HRG; the interaction occurs on the surface of T-cells and alters the cell morphology when associated with concanavalin (in vitro). Interacts with PLG (angiostatin peptide); the interaction inhibits most of the angiogenic properties of angiostatin. Interacts with BLOC1S1 (By similarity). Interacts with BCL2L1 isoform BCL-X(L); the interaction mediates the association of BCL2L1 isoform BCL-X(L) with the mitochondrial membrane F(1)F(0) ATP synthase and enhances neurons metabolic efficiency (By similarity). Interacts with CLN5 and PPT1 (PubMed:19941651). Interacts with S100A1; this interaction increases F1-ATPase activity (PubMed:17438143). Interacts with ABCB7; this interaction allows the regulation of cellular iron homeostasis and cellular reactive oxygen species (ROS) levels in cardiomyocytes (By similarity).</text>
</comment>
<comment type="subcellular location">
    <subcellularLocation>
        <location evidence="5">Mitochondrion inner membrane</location>
        <topology evidence="5">Peripheral membrane protein</topology>
        <orientation evidence="3">Matrix side</orientation>
    </subcellularLocation>
    <subcellularLocation>
        <location evidence="4">Cell membrane</location>
        <topology evidence="4">Peripheral membrane protein</topology>
        <orientation evidence="4">Extracellular side</orientation>
    </subcellularLocation>
    <text evidence="4">Colocalizes with HRG on the cell surface of T-cells.</text>
</comment>
<comment type="PTM">
    <text evidence="4">Acetylated on lysine residues. BLOC1S1 is required for acetylation (By similarity). Acetylation of Lys-132, Lys-230 and Lys-498 is observed in liver mitochondria from fasted mice but not from fed mice.</text>
</comment>
<comment type="miscellaneous">
    <text evidence="4">The siderophore enterobactin (Ent) produced by enteric bacteria binds Fe(3+) and helps bacteria scavenge iron ions from the environment. As a consequence, the mammalian siderocalin LCN2 plays an important role in defense against bacterial infections by sequestering iron bound to microbial siderophores. LCN2 can also bind iron bound to endogenous or nutrient-derived iron chelators and plays an important role in cellular iron homeostasis. Enterobactin produced by non-pathogenic E.coli strains can facilitate mitochondrial iron assimilation, suggesting that iron bound to siderophores from non-pathogenic bacteria may contribute to iron absorption by the host.</text>
</comment>
<comment type="similarity">
    <text evidence="7">Belongs to the ATPase alpha/beta chains family.</text>
</comment>
<keyword id="KW-0007">Acetylation</keyword>
<keyword id="KW-0066">ATP synthesis</keyword>
<keyword id="KW-0067">ATP-binding</keyword>
<keyword id="KW-1003">Cell membrane</keyword>
<keyword id="KW-0139">CF(1)</keyword>
<keyword id="KW-0903">Direct protein sequencing</keyword>
<keyword id="KW-0325">Glycoprotein</keyword>
<keyword id="KW-0375">Hydrogen ion transport</keyword>
<keyword id="KW-0406">Ion transport</keyword>
<keyword id="KW-0460">Magnesium</keyword>
<keyword id="KW-0472">Membrane</keyword>
<keyword id="KW-0479">Metal-binding</keyword>
<keyword id="KW-0488">Methylation</keyword>
<keyword id="KW-0496">Mitochondrion</keyword>
<keyword id="KW-0999">Mitochondrion inner membrane</keyword>
<keyword id="KW-0547">Nucleotide-binding</keyword>
<keyword id="KW-0597">Phosphoprotein</keyword>
<keyword id="KW-1185">Reference proteome</keyword>
<keyword id="KW-0809">Transit peptide</keyword>
<keyword id="KW-0813">Transport</keyword>
<accession>Q03265</accession>
<accession>Q3TFN0</accession>
<accession>Q3THN8</accession>
<accession>Q3TPR0</accession>
<accession>Q3TPV3</accession>
<accession>Q3TZU3</accession>
<accession>Q3UIR7</accession>
<accession>Q543Y6</accession>
<organism>
    <name type="scientific">Mus musculus</name>
    <name type="common">Mouse</name>
    <dbReference type="NCBI Taxonomy" id="10090"/>
    <lineage>
        <taxon>Eukaryota</taxon>
        <taxon>Metazoa</taxon>
        <taxon>Chordata</taxon>
        <taxon>Craniata</taxon>
        <taxon>Vertebrata</taxon>
        <taxon>Euteleostomi</taxon>
        <taxon>Mammalia</taxon>
        <taxon>Eutheria</taxon>
        <taxon>Euarchontoglires</taxon>
        <taxon>Glires</taxon>
        <taxon>Rodentia</taxon>
        <taxon>Myomorpha</taxon>
        <taxon>Muroidea</taxon>
        <taxon>Muridae</taxon>
        <taxon>Murinae</taxon>
        <taxon>Mus</taxon>
        <taxon>Mus</taxon>
    </lineage>
</organism>
<dbReference type="EMBL" id="L01062">
    <property type="protein sequence ID" value="AAA37271.1"/>
    <property type="molecule type" value="mRNA"/>
</dbReference>
<dbReference type="EMBL" id="AK043976">
    <property type="protein sequence ID" value="BAC31722.1"/>
    <property type="molecule type" value="mRNA"/>
</dbReference>
<dbReference type="EMBL" id="AK076572">
    <property type="protein sequence ID" value="BAC36399.1"/>
    <property type="molecule type" value="mRNA"/>
</dbReference>
<dbReference type="EMBL" id="AK146797">
    <property type="protein sequence ID" value="BAE27439.1"/>
    <property type="molecule type" value="mRNA"/>
</dbReference>
<dbReference type="EMBL" id="AK150426">
    <property type="protein sequence ID" value="BAE29549.1"/>
    <property type="molecule type" value="mRNA"/>
</dbReference>
<dbReference type="EMBL" id="AK150843">
    <property type="protein sequence ID" value="BAE29901.1"/>
    <property type="molecule type" value="mRNA"/>
</dbReference>
<dbReference type="EMBL" id="AK151004">
    <property type="protein sequence ID" value="BAE30027.1"/>
    <property type="molecule type" value="mRNA"/>
</dbReference>
<dbReference type="EMBL" id="AK151128">
    <property type="protein sequence ID" value="BAE30136.1"/>
    <property type="molecule type" value="mRNA"/>
</dbReference>
<dbReference type="EMBL" id="AK151224">
    <property type="protein sequence ID" value="BAE30216.1"/>
    <property type="molecule type" value="mRNA"/>
</dbReference>
<dbReference type="EMBL" id="AK151920">
    <property type="protein sequence ID" value="BAE30798.1"/>
    <property type="molecule type" value="mRNA"/>
</dbReference>
<dbReference type="EMBL" id="AK152054">
    <property type="protein sequence ID" value="BAE30910.1"/>
    <property type="molecule type" value="mRNA"/>
</dbReference>
<dbReference type="EMBL" id="AK152890">
    <property type="protein sequence ID" value="BAE31573.1"/>
    <property type="molecule type" value="mRNA"/>
</dbReference>
<dbReference type="EMBL" id="AK157529">
    <property type="protein sequence ID" value="BAE34114.1"/>
    <property type="molecule type" value="mRNA"/>
</dbReference>
<dbReference type="EMBL" id="AK159540">
    <property type="protein sequence ID" value="BAE35167.1"/>
    <property type="molecule type" value="mRNA"/>
</dbReference>
<dbReference type="EMBL" id="AK159491">
    <property type="protein sequence ID" value="BAE35125.1"/>
    <property type="molecule type" value="mRNA"/>
</dbReference>
<dbReference type="EMBL" id="AK159758">
    <property type="protein sequence ID" value="BAE35349.1"/>
    <property type="molecule type" value="mRNA"/>
</dbReference>
<dbReference type="EMBL" id="AK160043">
    <property type="protein sequence ID" value="BAE35585.1"/>
    <property type="molecule type" value="mRNA"/>
</dbReference>
<dbReference type="EMBL" id="AK164110">
    <property type="protein sequence ID" value="BAE37632.1"/>
    <property type="molecule type" value="mRNA"/>
</dbReference>
<dbReference type="EMBL" id="AK164193">
    <property type="protein sequence ID" value="BAE37675.1"/>
    <property type="molecule type" value="mRNA"/>
</dbReference>
<dbReference type="EMBL" id="AK166709">
    <property type="protein sequence ID" value="BAE38962.1"/>
    <property type="molecule type" value="mRNA"/>
</dbReference>
<dbReference type="EMBL" id="AK166812">
    <property type="protein sequence ID" value="BAE39039.1"/>
    <property type="molecule type" value="mRNA"/>
</dbReference>
<dbReference type="EMBL" id="AK167159">
    <property type="protein sequence ID" value="BAE39300.1"/>
    <property type="molecule type" value="mRNA"/>
</dbReference>
<dbReference type="EMBL" id="AK167863">
    <property type="protein sequence ID" value="BAE39881.1"/>
    <property type="molecule type" value="mRNA"/>
</dbReference>
<dbReference type="EMBL" id="AK168198">
    <property type="protein sequence ID" value="BAE40158.1"/>
    <property type="molecule type" value="mRNA"/>
</dbReference>
<dbReference type="EMBL" id="AK168617">
    <property type="protein sequence ID" value="BAE40482.1"/>
    <property type="molecule type" value="mRNA"/>
</dbReference>
<dbReference type="EMBL" id="AK168879">
    <property type="protein sequence ID" value="BAE40697.1"/>
    <property type="molecule type" value="mRNA"/>
</dbReference>
<dbReference type="EMBL" id="AK168890">
    <property type="protein sequence ID" value="BAE40707.1"/>
    <property type="molecule type" value="mRNA"/>
</dbReference>
<dbReference type="EMBL" id="AK168932">
    <property type="protein sequence ID" value="BAE40744.1"/>
    <property type="molecule type" value="mRNA"/>
</dbReference>
<dbReference type="EMBL" id="AK169080">
    <property type="protein sequence ID" value="BAE40864.1"/>
    <property type="molecule type" value="mRNA"/>
</dbReference>
<dbReference type="EMBL" id="AK169084">
    <property type="protein sequence ID" value="BAE40868.1"/>
    <property type="molecule type" value="mRNA"/>
</dbReference>
<dbReference type="EMBL" id="AK169105">
    <property type="protein sequence ID" value="BAE40887.1"/>
    <property type="molecule type" value="mRNA"/>
</dbReference>
<dbReference type="EMBL" id="AK169142">
    <property type="protein sequence ID" value="BAE40921.1"/>
    <property type="molecule type" value="mRNA"/>
</dbReference>
<dbReference type="EMBL" id="AK169300">
    <property type="protein sequence ID" value="BAE41056.1"/>
    <property type="molecule type" value="mRNA"/>
</dbReference>
<dbReference type="EMBL" id="AK169308">
    <property type="protein sequence ID" value="BAE41063.1"/>
    <property type="molecule type" value="mRNA"/>
</dbReference>
<dbReference type="EMBL" id="AK169414">
    <property type="protein sequence ID" value="BAE41160.1"/>
    <property type="molecule type" value="mRNA"/>
</dbReference>
<dbReference type="EMBL" id="BC014854">
    <property type="protein sequence ID" value="AAH14854.1"/>
    <property type="molecule type" value="mRNA"/>
</dbReference>
<dbReference type="CCDS" id="CCDS29358.1"/>
<dbReference type="PIR" id="JC1473">
    <property type="entry name" value="JC1473"/>
</dbReference>
<dbReference type="RefSeq" id="NP_031531.1">
    <property type="nucleotide sequence ID" value="NM_007505.2"/>
</dbReference>
<dbReference type="SMR" id="Q03265"/>
<dbReference type="BioGRID" id="198253">
    <property type="interactions" value="174"/>
</dbReference>
<dbReference type="FunCoup" id="Q03265">
    <property type="interactions" value="1846"/>
</dbReference>
<dbReference type="IntAct" id="Q03265">
    <property type="interactions" value="33"/>
</dbReference>
<dbReference type="MINT" id="Q03265"/>
<dbReference type="STRING" id="10090.ENSMUSP00000026495"/>
<dbReference type="CarbonylDB" id="Q03265"/>
<dbReference type="GlyCosmos" id="Q03265">
    <property type="glycosylation" value="1 site, No reported glycans"/>
</dbReference>
<dbReference type="GlyGen" id="Q03265">
    <property type="glycosylation" value="4 sites, 1 O-linked glycan (4 sites)"/>
</dbReference>
<dbReference type="iPTMnet" id="Q03265"/>
<dbReference type="MetOSite" id="Q03265"/>
<dbReference type="PhosphoSitePlus" id="Q03265"/>
<dbReference type="SwissPalm" id="Q03265"/>
<dbReference type="REPRODUCTION-2DPAGE" id="IPI00130280"/>
<dbReference type="REPRODUCTION-2DPAGE" id="Q03265"/>
<dbReference type="CPTAC" id="non-CPTAC-3765"/>
<dbReference type="jPOST" id="Q03265"/>
<dbReference type="PaxDb" id="10090-ENSMUSP00000026495"/>
<dbReference type="PeptideAtlas" id="Q03265"/>
<dbReference type="ProteomicsDB" id="277216"/>
<dbReference type="Pumba" id="Q03265"/>
<dbReference type="Antibodypedia" id="22447">
    <property type="antibodies" value="352 antibodies from 35 providers"/>
</dbReference>
<dbReference type="DNASU" id="11946"/>
<dbReference type="Ensembl" id="ENSMUST00000026495.15">
    <property type="protein sequence ID" value="ENSMUSP00000026495.9"/>
    <property type="gene ID" value="ENSMUSG00000025428.16"/>
</dbReference>
<dbReference type="GeneID" id="11946"/>
<dbReference type="KEGG" id="mmu:11946"/>
<dbReference type="UCSC" id="uc008fru.1">
    <property type="organism name" value="mouse"/>
</dbReference>
<dbReference type="AGR" id="MGI:88115"/>
<dbReference type="CTD" id="498"/>
<dbReference type="MGI" id="MGI:88115">
    <property type="gene designation" value="Atp5f1a"/>
</dbReference>
<dbReference type="VEuPathDB" id="HostDB:ENSMUSG00000025428"/>
<dbReference type="eggNOG" id="KOG1353">
    <property type="taxonomic scope" value="Eukaryota"/>
</dbReference>
<dbReference type="GeneTree" id="ENSGT00550000074846"/>
<dbReference type="InParanoid" id="Q03265"/>
<dbReference type="OMA" id="INQRDNW"/>
<dbReference type="OrthoDB" id="9805536at2759"/>
<dbReference type="PhylomeDB" id="Q03265"/>
<dbReference type="TreeFam" id="TF300321"/>
<dbReference type="Reactome" id="R-MMU-163210">
    <property type="pathway name" value="Formation of ATP by chemiosmotic coupling"/>
</dbReference>
<dbReference type="Reactome" id="R-MMU-8949613">
    <property type="pathway name" value="Cristae formation"/>
</dbReference>
<dbReference type="Reactome" id="R-MMU-9837999">
    <property type="pathway name" value="Mitochondrial protein degradation"/>
</dbReference>
<dbReference type="BioGRID-ORCS" id="11946">
    <property type="hits" value="26 hits in 77 CRISPR screens"/>
</dbReference>
<dbReference type="CD-CODE" id="CE726F99">
    <property type="entry name" value="Postsynaptic density"/>
</dbReference>
<dbReference type="ChiTaRS" id="Atp5a1">
    <property type="organism name" value="mouse"/>
</dbReference>
<dbReference type="PRO" id="PR:Q03265"/>
<dbReference type="Proteomes" id="UP000000589">
    <property type="component" value="Chromosome 18"/>
</dbReference>
<dbReference type="RNAct" id="Q03265">
    <property type="molecule type" value="protein"/>
</dbReference>
<dbReference type="Bgee" id="ENSMUSG00000025428">
    <property type="expression patterns" value="Expressed in heart and 117 other cell types or tissues"/>
</dbReference>
<dbReference type="ExpressionAtlas" id="Q03265">
    <property type="expression patterns" value="baseline and differential"/>
</dbReference>
<dbReference type="GO" id="GO:0009986">
    <property type="term" value="C:cell surface"/>
    <property type="evidence" value="ECO:0007669"/>
    <property type="project" value="Ensembl"/>
</dbReference>
<dbReference type="GO" id="GO:0016020">
    <property type="term" value="C:membrane"/>
    <property type="evidence" value="ECO:0000315"/>
    <property type="project" value="ParkinsonsUK-UCL"/>
</dbReference>
<dbReference type="GO" id="GO:0045121">
    <property type="term" value="C:membrane raft"/>
    <property type="evidence" value="ECO:0007669"/>
    <property type="project" value="Ensembl"/>
</dbReference>
<dbReference type="GO" id="GO:0005743">
    <property type="term" value="C:mitochondrial inner membrane"/>
    <property type="evidence" value="ECO:0007005"/>
    <property type="project" value="MGI"/>
</dbReference>
<dbReference type="GO" id="GO:0005739">
    <property type="term" value="C:mitochondrion"/>
    <property type="evidence" value="ECO:0000314"/>
    <property type="project" value="MGI"/>
</dbReference>
<dbReference type="GO" id="GO:0043209">
    <property type="term" value="C:myelin sheath"/>
    <property type="evidence" value="ECO:0007005"/>
    <property type="project" value="UniProtKB"/>
</dbReference>
<dbReference type="GO" id="GO:0005886">
    <property type="term" value="C:plasma membrane"/>
    <property type="evidence" value="ECO:0007669"/>
    <property type="project" value="UniProtKB-SubCell"/>
</dbReference>
<dbReference type="GO" id="GO:0045259">
    <property type="term" value="C:proton-transporting ATP synthase complex"/>
    <property type="evidence" value="ECO:0000250"/>
    <property type="project" value="UniProtKB"/>
</dbReference>
<dbReference type="GO" id="GO:0043531">
    <property type="term" value="F:ADP binding"/>
    <property type="evidence" value="ECO:0007669"/>
    <property type="project" value="Ensembl"/>
</dbReference>
<dbReference type="GO" id="GO:0043532">
    <property type="term" value="F:angiostatin binding"/>
    <property type="evidence" value="ECO:0007669"/>
    <property type="project" value="Ensembl"/>
</dbReference>
<dbReference type="GO" id="GO:0005524">
    <property type="term" value="F:ATP binding"/>
    <property type="evidence" value="ECO:0000315"/>
    <property type="project" value="MGI"/>
</dbReference>
<dbReference type="GO" id="GO:0016887">
    <property type="term" value="F:ATP hydrolysis activity"/>
    <property type="evidence" value="ECO:0007669"/>
    <property type="project" value="Ensembl"/>
</dbReference>
<dbReference type="GO" id="GO:0042288">
    <property type="term" value="F:MHC class I protein binding"/>
    <property type="evidence" value="ECO:0007669"/>
    <property type="project" value="Ensembl"/>
</dbReference>
<dbReference type="GO" id="GO:0002020">
    <property type="term" value="F:protease binding"/>
    <property type="evidence" value="ECO:0007669"/>
    <property type="project" value="Ensembl"/>
</dbReference>
<dbReference type="GO" id="GO:0046933">
    <property type="term" value="F:proton-transporting ATP synthase activity, rotational mechanism"/>
    <property type="evidence" value="ECO:0000315"/>
    <property type="project" value="MGI"/>
</dbReference>
<dbReference type="GO" id="GO:0071549">
    <property type="term" value="P:cellular response to dexamethasone stimulus"/>
    <property type="evidence" value="ECO:0007669"/>
    <property type="project" value="Ensembl"/>
</dbReference>
<dbReference type="GO" id="GO:0071732">
    <property type="term" value="P:cellular response to nitric oxide"/>
    <property type="evidence" value="ECO:0007669"/>
    <property type="project" value="Ensembl"/>
</dbReference>
<dbReference type="GO" id="GO:0006629">
    <property type="term" value="P:lipid metabolic process"/>
    <property type="evidence" value="ECO:0000315"/>
    <property type="project" value="MGI"/>
</dbReference>
<dbReference type="GO" id="GO:0001937">
    <property type="term" value="P:negative regulation of endothelial cell proliferation"/>
    <property type="evidence" value="ECO:0007669"/>
    <property type="project" value="Ensembl"/>
</dbReference>
<dbReference type="GO" id="GO:0043536">
    <property type="term" value="P:positive regulation of blood vessel endothelial cell migration"/>
    <property type="evidence" value="ECO:0007669"/>
    <property type="project" value="Ensembl"/>
</dbReference>
<dbReference type="GO" id="GO:0015986">
    <property type="term" value="P:proton motive force-driven ATP synthesis"/>
    <property type="evidence" value="ECO:0000250"/>
    <property type="project" value="UniProtKB"/>
</dbReference>
<dbReference type="GO" id="GO:0042776">
    <property type="term" value="P:proton motive force-driven mitochondrial ATP synthesis"/>
    <property type="evidence" value="ECO:0007669"/>
    <property type="project" value="Ensembl"/>
</dbReference>
<dbReference type="GO" id="GO:0045471">
    <property type="term" value="P:response to ethanol"/>
    <property type="evidence" value="ECO:0007669"/>
    <property type="project" value="Ensembl"/>
</dbReference>
<dbReference type="GO" id="GO:0014850">
    <property type="term" value="P:response to muscle activity"/>
    <property type="evidence" value="ECO:0007669"/>
    <property type="project" value="Ensembl"/>
</dbReference>
<dbReference type="CDD" id="cd18113">
    <property type="entry name" value="ATP-synt_F1_alpha_C"/>
    <property type="match status" value="1"/>
</dbReference>
<dbReference type="CDD" id="cd18116">
    <property type="entry name" value="ATP-synt_F1_alpha_N"/>
    <property type="match status" value="1"/>
</dbReference>
<dbReference type="CDD" id="cd01132">
    <property type="entry name" value="F1-ATPase_alpha_CD"/>
    <property type="match status" value="1"/>
</dbReference>
<dbReference type="FunFam" id="1.20.150.20:FF:000001">
    <property type="entry name" value="ATP synthase subunit alpha"/>
    <property type="match status" value="1"/>
</dbReference>
<dbReference type="FunFam" id="2.40.30.20:FF:000001">
    <property type="entry name" value="ATP synthase subunit alpha"/>
    <property type="match status" value="1"/>
</dbReference>
<dbReference type="FunFam" id="3.40.50.300:FF:002432">
    <property type="entry name" value="ATP synthase subunit alpha, mitochondrial"/>
    <property type="match status" value="1"/>
</dbReference>
<dbReference type="Gene3D" id="2.40.30.20">
    <property type="match status" value="1"/>
</dbReference>
<dbReference type="Gene3D" id="1.20.150.20">
    <property type="entry name" value="ATP synthase alpha/beta chain, C-terminal domain"/>
    <property type="match status" value="1"/>
</dbReference>
<dbReference type="Gene3D" id="3.40.50.300">
    <property type="entry name" value="P-loop containing nucleotide triphosphate hydrolases"/>
    <property type="match status" value="1"/>
</dbReference>
<dbReference type="HAMAP" id="MF_01346">
    <property type="entry name" value="ATP_synth_alpha_bact"/>
    <property type="match status" value="1"/>
</dbReference>
<dbReference type="InterPro" id="IPR023366">
    <property type="entry name" value="ATP_synth_asu-like_sf"/>
</dbReference>
<dbReference type="InterPro" id="IPR000793">
    <property type="entry name" value="ATP_synth_asu_C"/>
</dbReference>
<dbReference type="InterPro" id="IPR038376">
    <property type="entry name" value="ATP_synth_asu_C_sf"/>
</dbReference>
<dbReference type="InterPro" id="IPR033732">
    <property type="entry name" value="ATP_synth_F1_a_nt-bd_dom"/>
</dbReference>
<dbReference type="InterPro" id="IPR005294">
    <property type="entry name" value="ATP_synth_F1_asu"/>
</dbReference>
<dbReference type="InterPro" id="IPR020003">
    <property type="entry name" value="ATPase_a/bsu_AS"/>
</dbReference>
<dbReference type="InterPro" id="IPR004100">
    <property type="entry name" value="ATPase_F1/V1/A1_a/bsu_N"/>
</dbReference>
<dbReference type="InterPro" id="IPR036121">
    <property type="entry name" value="ATPase_F1/V1/A1_a/bsu_N_sf"/>
</dbReference>
<dbReference type="InterPro" id="IPR000194">
    <property type="entry name" value="ATPase_F1/V1/A1_a/bsu_nucl-bd"/>
</dbReference>
<dbReference type="InterPro" id="IPR027417">
    <property type="entry name" value="P-loop_NTPase"/>
</dbReference>
<dbReference type="NCBIfam" id="TIGR00962">
    <property type="entry name" value="atpA"/>
    <property type="match status" value="1"/>
</dbReference>
<dbReference type="NCBIfam" id="NF009884">
    <property type="entry name" value="PRK13343.1"/>
    <property type="match status" value="1"/>
</dbReference>
<dbReference type="PANTHER" id="PTHR48082">
    <property type="entry name" value="ATP SYNTHASE SUBUNIT ALPHA, MITOCHONDRIAL"/>
    <property type="match status" value="1"/>
</dbReference>
<dbReference type="PANTHER" id="PTHR48082:SF2">
    <property type="entry name" value="ATP SYNTHASE SUBUNIT ALPHA, MITOCHONDRIAL"/>
    <property type="match status" value="1"/>
</dbReference>
<dbReference type="Pfam" id="PF00006">
    <property type="entry name" value="ATP-synt_ab"/>
    <property type="match status" value="1"/>
</dbReference>
<dbReference type="Pfam" id="PF00306">
    <property type="entry name" value="ATP-synt_ab_C"/>
    <property type="match status" value="1"/>
</dbReference>
<dbReference type="Pfam" id="PF02874">
    <property type="entry name" value="ATP-synt_ab_N"/>
    <property type="match status" value="1"/>
</dbReference>
<dbReference type="PIRSF" id="PIRSF039088">
    <property type="entry name" value="F_ATPase_subunit_alpha"/>
    <property type="match status" value="1"/>
</dbReference>
<dbReference type="SUPFAM" id="SSF47917">
    <property type="entry name" value="C-terminal domain of alpha and beta subunits of F1 ATP synthase"/>
    <property type="match status" value="1"/>
</dbReference>
<dbReference type="SUPFAM" id="SSF50615">
    <property type="entry name" value="N-terminal domain of alpha and beta subunits of F1 ATP synthase"/>
    <property type="match status" value="1"/>
</dbReference>
<dbReference type="SUPFAM" id="SSF52540">
    <property type="entry name" value="P-loop containing nucleoside triphosphate hydrolases"/>
    <property type="match status" value="1"/>
</dbReference>
<dbReference type="PROSITE" id="PS00152">
    <property type="entry name" value="ATPASE_ALPHA_BETA"/>
    <property type="match status" value="1"/>
</dbReference>
<feature type="transit peptide" description="Mitochondrion" evidence="3">
    <location>
        <begin position="1"/>
        <end position="43"/>
    </location>
</feature>
<feature type="chain" id="PRO_0000002425" description="ATP synthase F(1) complex subunit alpha, mitochondrial">
    <location>
        <begin position="44"/>
        <end position="553"/>
    </location>
</feature>
<feature type="binding site" evidence="4">
    <location>
        <position position="215"/>
    </location>
    <ligand>
        <name>ATP</name>
        <dbReference type="ChEBI" id="CHEBI:30616"/>
        <note>ligand shared between homotrimeric partners</note>
    </ligand>
</feature>
<feature type="binding site" evidence="4">
    <location>
        <position position="217"/>
    </location>
    <ligand>
        <name>ATP</name>
        <dbReference type="ChEBI" id="CHEBI:30616"/>
        <note>ligand shared between homotrimeric partners</note>
    </ligand>
</feature>
<feature type="binding site" evidence="4">
    <location>
        <position position="218"/>
    </location>
    <ligand>
        <name>ATP</name>
        <dbReference type="ChEBI" id="CHEBI:30616"/>
        <note>ligand shared between homotrimeric partners</note>
    </ligand>
</feature>
<feature type="binding site" evidence="4">
    <location>
        <position position="219"/>
    </location>
    <ligand>
        <name>ATP</name>
        <dbReference type="ChEBI" id="CHEBI:30616"/>
        <note>ligand shared between homotrimeric partners</note>
    </ligand>
</feature>
<feature type="binding site" evidence="4">
    <location>
        <position position="219"/>
    </location>
    <ligand>
        <name>Mg(2+)</name>
        <dbReference type="ChEBI" id="CHEBI:18420"/>
        <note>ligand shared between homotrimeric partners</note>
    </ligand>
</feature>
<feature type="binding site" evidence="4">
    <location>
        <position position="220"/>
    </location>
    <ligand>
        <name>ATP</name>
        <dbReference type="ChEBI" id="CHEBI:30616"/>
        <note>ligand shared between homotrimeric partners</note>
    </ligand>
</feature>
<feature type="binding site" evidence="4">
    <location>
        <position position="312"/>
    </location>
    <ligand>
        <name>Mg(2+)</name>
        <dbReference type="ChEBI" id="CHEBI:18420"/>
        <note>ligand shared between homotrimeric partners</note>
    </ligand>
</feature>
<feature type="binding site" evidence="4">
    <location>
        <position position="473"/>
    </location>
    <ligand>
        <name>ATP</name>
        <dbReference type="ChEBI" id="CHEBI:30616"/>
        <note>ligand shared between homotrimeric partners</note>
    </ligand>
</feature>
<feature type="binding site" evidence="4">
    <location>
        <position position="475"/>
    </location>
    <ligand>
        <name>ATP</name>
        <dbReference type="ChEBI" id="CHEBI:30616"/>
        <note>ligand shared between homotrimeric partners</note>
    </ligand>
</feature>
<feature type="site" description="Required for activity" evidence="1">
    <location>
        <position position="413"/>
    </location>
</feature>
<feature type="modified residue" description="Phosphoserine" evidence="9">
    <location>
        <position position="53"/>
    </location>
</feature>
<feature type="modified residue" description="Phosphoserine" evidence="4">
    <location>
        <position position="65"/>
    </location>
</feature>
<feature type="modified residue" description="Phosphoserine; alternate" evidence="8">
    <location>
        <position position="76"/>
    </location>
</feature>
<feature type="modified residue" description="Phosphoserine" evidence="9">
    <location>
        <position position="106"/>
    </location>
</feature>
<feature type="modified residue" description="N6-acetyllysine" evidence="10">
    <location>
        <position position="123"/>
    </location>
</feature>
<feature type="modified residue" description="N6-acetyllysine" evidence="10">
    <location>
        <position position="126"/>
    </location>
</feature>
<feature type="modified residue" description="N6-acetyllysine" evidence="10">
    <location>
        <position position="132"/>
    </location>
</feature>
<feature type="modified residue" description="Phosphothreonine" evidence="2">
    <location>
        <position position="134"/>
    </location>
</feature>
<feature type="modified residue" description="N6-acetyllysine; alternate" evidence="10">
    <location>
        <position position="161"/>
    </location>
</feature>
<feature type="modified residue" description="N6-succinyllysine; alternate" evidence="11">
    <location>
        <position position="161"/>
    </location>
</feature>
<feature type="modified residue" description="Phosphoserine" evidence="4">
    <location>
        <position position="166"/>
    </location>
</feature>
<feature type="modified residue" description="N6-acetyllysine; alternate" evidence="10">
    <location>
        <position position="167"/>
    </location>
</feature>
<feature type="modified residue" description="N6-succinyllysine; alternate" evidence="11">
    <location>
        <position position="167"/>
    </location>
</feature>
<feature type="modified residue" description="Phosphoserine" evidence="4">
    <location>
        <position position="184"/>
    </location>
</feature>
<feature type="modified residue" description="Omega-N-methylarginine" evidence="12">
    <location>
        <position position="204"/>
    </location>
</feature>
<feature type="modified residue" description="N6-acetyllysine; alternate" evidence="10">
    <location>
        <position position="230"/>
    </location>
</feature>
<feature type="modified residue" description="N6-succinyllysine; alternate" evidence="11">
    <location>
        <position position="230"/>
    </location>
</feature>
<feature type="modified residue" description="N6-acetyllysine; alternate" evidence="10">
    <location>
        <position position="239"/>
    </location>
</feature>
<feature type="modified residue" description="N6-succinyllysine; alternate" evidence="11">
    <location>
        <position position="239"/>
    </location>
</feature>
<feature type="modified residue" description="N6-acetyllysine" evidence="10">
    <location>
        <position position="240"/>
    </location>
</feature>
<feature type="modified residue" description="N6-acetyllysine; alternate" evidence="10">
    <location>
        <position position="261"/>
    </location>
</feature>
<feature type="modified residue" description="N6-succinyllysine; alternate" evidence="11">
    <location>
        <position position="261"/>
    </location>
</feature>
<feature type="modified residue" description="N6-acetyllysine; alternate" evidence="10">
    <location>
        <position position="305"/>
    </location>
</feature>
<feature type="modified residue" description="N6-succinyllysine; alternate" evidence="11">
    <location>
        <position position="305"/>
    </location>
</feature>
<feature type="modified residue" description="N6-acetyllysine; alternate" evidence="10">
    <location>
        <position position="427"/>
    </location>
</feature>
<feature type="modified residue" description="N6-succinyllysine; alternate" evidence="11">
    <location>
        <position position="427"/>
    </location>
</feature>
<feature type="modified residue" description="N6-acetyllysine" evidence="10">
    <location>
        <position position="434"/>
    </location>
</feature>
<feature type="modified residue" description="N6-acetyllysine; alternate" evidence="10 11">
    <location>
        <position position="498"/>
    </location>
</feature>
<feature type="modified residue" description="N6-succinyllysine; alternate" evidence="11">
    <location>
        <position position="498"/>
    </location>
</feature>
<feature type="modified residue" description="N6-acetyllysine; alternate" evidence="10">
    <location>
        <position position="506"/>
    </location>
</feature>
<feature type="modified residue" description="N6-succinyllysine; alternate" evidence="11">
    <location>
        <position position="506"/>
    </location>
</feature>
<feature type="modified residue" description="Phosphoserine" evidence="9">
    <location>
        <position position="521"/>
    </location>
</feature>
<feature type="modified residue" description="N6-acetyllysine; alternate" evidence="10 11">
    <location>
        <position position="531"/>
    </location>
</feature>
<feature type="modified residue" description="N6-succinyllysine; alternate" evidence="11">
    <location>
        <position position="531"/>
    </location>
</feature>
<feature type="modified residue" description="N6-acetyllysine; alternate" evidence="10 11">
    <location>
        <position position="539"/>
    </location>
</feature>
<feature type="modified residue" description="N6-succinyllysine; alternate" evidence="11">
    <location>
        <position position="539"/>
    </location>
</feature>
<feature type="modified residue" description="N6-acetyllysine" evidence="10">
    <location>
        <position position="541"/>
    </location>
</feature>
<feature type="glycosylation site" description="O-linked (GlcNAc) serine; alternate" evidence="1">
    <location>
        <position position="76"/>
    </location>
</feature>
<feature type="sequence conflict" description="In Ref. 2; BAE37632." evidence="7" ref="2">
    <original>S</original>
    <variation>T</variation>
    <location>
        <position position="3"/>
    </location>
</feature>
<feature type="sequence conflict" description="In Ref. 2; BAE34114." evidence="7" ref="2">
    <original>D</original>
    <variation>Y</variation>
    <location>
        <position position="63"/>
    </location>
</feature>
<feature type="sequence conflict" description="In Ref. 2; BAE34114." evidence="7" ref="2">
    <original>F</original>
    <variation>L</variation>
    <location>
        <position position="119"/>
    </location>
</feature>
<feature type="sequence conflict" description="In Ref. 2; BAE34114." evidence="7" ref="2">
    <original>K</original>
    <variation>N</variation>
    <location>
        <position position="126"/>
    </location>
</feature>
<feature type="sequence conflict" description="In Ref. 2; BAE34114." evidence="7" ref="2">
    <original>S</original>
    <variation>Y</variation>
    <location>
        <position position="315"/>
    </location>
</feature>
<feature type="sequence conflict" description="In Ref. 2; BAE40868." evidence="7" ref="2">
    <original>Y</original>
    <variation>C</variation>
    <location>
        <position position="321"/>
    </location>
</feature>
<feature type="sequence conflict" description="In Ref. 2; BAE27439." evidence="7" ref="2">
    <location>
        <begin position="422"/>
        <end position="456"/>
    </location>
</feature>
<feature type="sequence conflict" description="In Ref. 2; BAE40158." evidence="7" ref="2">
    <original>A</original>
    <variation>T</variation>
    <location>
        <position position="486"/>
    </location>
</feature>
<sequence length="553" mass="59753">MLSVRVAAAVARALPRRAGLVSKNALGSSFVGARNLHASNTRLQKTGTAEMSSILEERILGADTSVDLEETGRVLSIGDGIARVHGLRNVQAEEMVEFSSGLKGMSLNLEPDNVGVVVFGNDKLIKEGDVVKRTGAIVDVPVGEELLGRVVDALGNAIDGKGPIGSKTRRRVGLKAPGIIPRISVREPMQTGIKAVDSLVPIGRGQRELIIGDRQTGKTSIAIDTIINQKRFNDGTDEKKKLYCIYVAIGQKRSTVAQLVKRLTDADAMKYTIVVSATASDAAPLQYLAPYSGCSMGEYFRDNGKHALIIYDDLSKQAVAYRQMSLLLRRPPGREAYPGDVFYLHSRLLERAAKMNDSFGGGSLTALPVIETQAGDVSAYIPTNVISITDGQIFLETELFYKGIRPAINVGLSVSRVGSAAQTRAMKQVAGTMKLELAQYREVAAFAQFGSDLDAATQQLLSRGVRLTELLKQGQYSPMAIEEQVAVIYAGVRGYLDKLEPSKITKFENAFLSHVISQHQSLLGNIRSDGKISEQSDAKLKEIVTNFLAGFEP</sequence>
<name>ATPA_MOUSE</name>
<protein>
    <recommendedName>
        <fullName evidence="7">ATP synthase F(1) complex subunit alpha, mitochondrial</fullName>
    </recommendedName>
    <alternativeName>
        <fullName evidence="4">ATP synthase F1 subunit alpha</fullName>
    </alternativeName>
</protein>
<evidence type="ECO:0000250" key="1"/>
<evidence type="ECO:0000250" key="2">
    <source>
        <dbReference type="UniProtKB" id="P15999"/>
    </source>
</evidence>
<evidence type="ECO:0000250" key="3">
    <source>
        <dbReference type="UniProtKB" id="P19483"/>
    </source>
</evidence>
<evidence type="ECO:0000250" key="4">
    <source>
        <dbReference type="UniProtKB" id="P25705"/>
    </source>
</evidence>
<evidence type="ECO:0000269" key="5">
    <source>
    </source>
</evidence>
<evidence type="ECO:0000269" key="6">
    <source>
    </source>
</evidence>
<evidence type="ECO:0000305" key="7"/>
<evidence type="ECO:0007744" key="8">
    <source>
    </source>
</evidence>
<evidence type="ECO:0007744" key="9">
    <source>
    </source>
</evidence>
<evidence type="ECO:0007744" key="10">
    <source>
    </source>
</evidence>
<evidence type="ECO:0007744" key="11">
    <source>
    </source>
</evidence>
<evidence type="ECO:0007744" key="12">
    <source>
    </source>
</evidence>
<proteinExistence type="evidence at protein level"/>
<gene>
    <name evidence="4" type="primary">Atp5f1a</name>
    <name type="synonym">Atp5a1</name>
</gene>
<reference key="1">
    <citation type="journal article" date="1993" name="Biochem. Biophys. Res. Commun.">
        <title>Cloning and functional expression analysis of the alpha subunit of mouse ATP synthase.</title>
        <authorList>
            <person name="Yotov W.V."/>
            <person name="St Arnaud R."/>
        </authorList>
    </citation>
    <scope>NUCLEOTIDE SEQUENCE [MRNA]</scope>
</reference>
<reference key="2">
    <citation type="journal article" date="2005" name="Science">
        <title>The transcriptional landscape of the mammalian genome.</title>
        <authorList>
            <person name="Carninci P."/>
            <person name="Kasukawa T."/>
            <person name="Katayama S."/>
            <person name="Gough J."/>
            <person name="Frith M.C."/>
            <person name="Maeda N."/>
            <person name="Oyama R."/>
            <person name="Ravasi T."/>
            <person name="Lenhard B."/>
            <person name="Wells C."/>
            <person name="Kodzius R."/>
            <person name="Shimokawa K."/>
            <person name="Bajic V.B."/>
            <person name="Brenner S.E."/>
            <person name="Batalov S."/>
            <person name="Forrest A.R."/>
            <person name="Zavolan M."/>
            <person name="Davis M.J."/>
            <person name="Wilming L.G."/>
            <person name="Aidinis V."/>
            <person name="Allen J.E."/>
            <person name="Ambesi-Impiombato A."/>
            <person name="Apweiler R."/>
            <person name="Aturaliya R.N."/>
            <person name="Bailey T.L."/>
            <person name="Bansal M."/>
            <person name="Baxter L."/>
            <person name="Beisel K.W."/>
            <person name="Bersano T."/>
            <person name="Bono H."/>
            <person name="Chalk A.M."/>
            <person name="Chiu K.P."/>
            <person name="Choudhary V."/>
            <person name="Christoffels A."/>
            <person name="Clutterbuck D.R."/>
            <person name="Crowe M.L."/>
            <person name="Dalla E."/>
            <person name="Dalrymple B.P."/>
            <person name="de Bono B."/>
            <person name="Della Gatta G."/>
            <person name="di Bernardo D."/>
            <person name="Down T."/>
            <person name="Engstrom P."/>
            <person name="Fagiolini M."/>
            <person name="Faulkner G."/>
            <person name="Fletcher C.F."/>
            <person name="Fukushima T."/>
            <person name="Furuno M."/>
            <person name="Futaki S."/>
            <person name="Gariboldi M."/>
            <person name="Georgii-Hemming P."/>
            <person name="Gingeras T.R."/>
            <person name="Gojobori T."/>
            <person name="Green R.E."/>
            <person name="Gustincich S."/>
            <person name="Harbers M."/>
            <person name="Hayashi Y."/>
            <person name="Hensch T.K."/>
            <person name="Hirokawa N."/>
            <person name="Hill D."/>
            <person name="Huminiecki L."/>
            <person name="Iacono M."/>
            <person name="Ikeo K."/>
            <person name="Iwama A."/>
            <person name="Ishikawa T."/>
            <person name="Jakt M."/>
            <person name="Kanapin A."/>
            <person name="Katoh M."/>
            <person name="Kawasawa Y."/>
            <person name="Kelso J."/>
            <person name="Kitamura H."/>
            <person name="Kitano H."/>
            <person name="Kollias G."/>
            <person name="Krishnan S.P."/>
            <person name="Kruger A."/>
            <person name="Kummerfeld S.K."/>
            <person name="Kurochkin I.V."/>
            <person name="Lareau L.F."/>
            <person name="Lazarevic D."/>
            <person name="Lipovich L."/>
            <person name="Liu J."/>
            <person name="Liuni S."/>
            <person name="McWilliam S."/>
            <person name="Madan Babu M."/>
            <person name="Madera M."/>
            <person name="Marchionni L."/>
            <person name="Matsuda H."/>
            <person name="Matsuzawa S."/>
            <person name="Miki H."/>
            <person name="Mignone F."/>
            <person name="Miyake S."/>
            <person name="Morris K."/>
            <person name="Mottagui-Tabar S."/>
            <person name="Mulder N."/>
            <person name="Nakano N."/>
            <person name="Nakauchi H."/>
            <person name="Ng P."/>
            <person name="Nilsson R."/>
            <person name="Nishiguchi S."/>
            <person name="Nishikawa S."/>
            <person name="Nori F."/>
            <person name="Ohara O."/>
            <person name="Okazaki Y."/>
            <person name="Orlando V."/>
            <person name="Pang K.C."/>
            <person name="Pavan W.J."/>
            <person name="Pavesi G."/>
            <person name="Pesole G."/>
            <person name="Petrovsky N."/>
            <person name="Piazza S."/>
            <person name="Reed J."/>
            <person name="Reid J.F."/>
            <person name="Ring B.Z."/>
            <person name="Ringwald M."/>
            <person name="Rost B."/>
            <person name="Ruan Y."/>
            <person name="Salzberg S.L."/>
            <person name="Sandelin A."/>
            <person name="Schneider C."/>
            <person name="Schoenbach C."/>
            <person name="Sekiguchi K."/>
            <person name="Semple C.A."/>
            <person name="Seno S."/>
            <person name="Sessa L."/>
            <person name="Sheng Y."/>
            <person name="Shibata Y."/>
            <person name="Shimada H."/>
            <person name="Shimada K."/>
            <person name="Silva D."/>
            <person name="Sinclair B."/>
            <person name="Sperling S."/>
            <person name="Stupka E."/>
            <person name="Sugiura K."/>
            <person name="Sultana R."/>
            <person name="Takenaka Y."/>
            <person name="Taki K."/>
            <person name="Tammoja K."/>
            <person name="Tan S.L."/>
            <person name="Tang S."/>
            <person name="Taylor M.S."/>
            <person name="Tegner J."/>
            <person name="Teichmann S.A."/>
            <person name="Ueda H.R."/>
            <person name="van Nimwegen E."/>
            <person name="Verardo R."/>
            <person name="Wei C.L."/>
            <person name="Yagi K."/>
            <person name="Yamanishi H."/>
            <person name="Zabarovsky E."/>
            <person name="Zhu S."/>
            <person name="Zimmer A."/>
            <person name="Hide W."/>
            <person name="Bult C."/>
            <person name="Grimmond S.M."/>
            <person name="Teasdale R.D."/>
            <person name="Liu E.T."/>
            <person name="Brusic V."/>
            <person name="Quackenbush J."/>
            <person name="Wahlestedt C."/>
            <person name="Mattick J.S."/>
            <person name="Hume D.A."/>
            <person name="Kai C."/>
            <person name="Sasaki D."/>
            <person name="Tomaru Y."/>
            <person name="Fukuda S."/>
            <person name="Kanamori-Katayama M."/>
            <person name="Suzuki M."/>
            <person name="Aoki J."/>
            <person name="Arakawa T."/>
            <person name="Iida J."/>
            <person name="Imamura K."/>
            <person name="Itoh M."/>
            <person name="Kato T."/>
            <person name="Kawaji H."/>
            <person name="Kawagashira N."/>
            <person name="Kawashima T."/>
            <person name="Kojima M."/>
            <person name="Kondo S."/>
            <person name="Konno H."/>
            <person name="Nakano K."/>
            <person name="Ninomiya N."/>
            <person name="Nishio T."/>
            <person name="Okada M."/>
            <person name="Plessy C."/>
            <person name="Shibata K."/>
            <person name="Shiraki T."/>
            <person name="Suzuki S."/>
            <person name="Tagami M."/>
            <person name="Waki K."/>
            <person name="Watahiki A."/>
            <person name="Okamura-Oho Y."/>
            <person name="Suzuki H."/>
            <person name="Kawai J."/>
            <person name="Hayashizaki Y."/>
        </authorList>
    </citation>
    <scope>NUCLEOTIDE SEQUENCE [LARGE SCALE MRNA]</scope>
    <source>
        <strain>BALB/cJ</strain>
        <strain>C57BL/6J</strain>
        <strain>NOD</strain>
        <tissue>Heart</tissue>
        <tissue>Hippocampus</tissue>
        <tissue>Liver</tissue>
        <tissue>Spinal cord</tissue>
        <tissue>Spleen</tissue>
    </source>
</reference>
<reference key="3">
    <citation type="journal article" date="2004" name="Genome Res.">
        <title>The status, quality, and expansion of the NIH full-length cDNA project: the Mammalian Gene Collection (MGC).</title>
        <authorList>
            <consortium name="The MGC Project Team"/>
        </authorList>
    </citation>
    <scope>NUCLEOTIDE SEQUENCE [LARGE SCALE MRNA]</scope>
    <source>
        <tissue>Eye</tissue>
    </source>
</reference>
<reference key="4">
    <citation type="submission" date="2009-01" db="UniProtKB">
        <authorList>
            <person name="Lubec G."/>
            <person name="Kang S.U."/>
            <person name="Klug S."/>
            <person name="Yang J.W."/>
            <person name="Zigmond M."/>
            <person name="Sunyer B."/>
            <person name="Chen W.-Q."/>
        </authorList>
    </citation>
    <scope>PROTEIN SEQUENCE OF 24-42; 46-83; 89-123; 133-161; 176-182; 195-204; 208-214; 219-230; 241-252; 254-261; 263-270; 306-316; 323-329; 335-347; 403-416; 435-463; 467-503; 507-527 AND 540-553</scope>
    <source>
        <strain>C57BL/6J</strain>
        <strain>OF1</strain>
        <tissue>Brain</tissue>
        <tissue>Hippocampus</tissue>
    </source>
</reference>
<reference key="5">
    <citation type="journal article" date="2005" name="Proteomics">
        <title>Quantitative analysis of both protein expression and serine / threonine post-translational modifications through stable isotope labeling with dithiothreitol.</title>
        <authorList>
            <person name="Vosseller K."/>
            <person name="Hansen K.C."/>
            <person name="Chalkley R.J."/>
            <person name="Trinidad J.C."/>
            <person name="Wells L."/>
            <person name="Hart G.W."/>
            <person name="Burlingame A.L."/>
        </authorList>
    </citation>
    <scope>PHOSPHORYLATION [LARGE SCALE ANALYSIS] AT SER-76</scope>
    <scope>IDENTIFICATION BY MASS SPECTROMETRY [LARGE SCALE ANALYSIS]</scope>
</reference>
<reference key="6">
    <citation type="journal article" date="2007" name="Mol. Cell. Biol.">
        <title>Ca2+ -dependent interaction of S100A1 with F1-ATPase leads to an increased ATP content in cardiomyocytes.</title>
        <authorList>
            <person name="Boerries M."/>
            <person name="Most P."/>
            <person name="Gledhill J.R."/>
            <person name="Walker J.E."/>
            <person name="Katus H.A."/>
            <person name="Koch W.J."/>
            <person name="Aebi U."/>
            <person name="Schoenenberger C.A."/>
        </authorList>
    </citation>
    <scope>SUBCELLULAR LOCATION</scope>
    <scope>INTERACTION WITH S100A1</scope>
</reference>
<reference key="7">
    <citation type="journal article" date="2009" name="BMC Cell Biol.">
        <title>Novel interactions of CLN5 support molecular networking between neuronal ceroid lipofuscinosis proteins.</title>
        <authorList>
            <person name="Lyly A."/>
            <person name="von Schantz C."/>
            <person name="Heine C."/>
            <person name="Schmiedt M.L."/>
            <person name="Sipilae T."/>
            <person name="Jalanko A."/>
            <person name="Kyttaelae A."/>
        </authorList>
    </citation>
    <scope>INTERACTION WITH CLN5 AND PPT1</scope>
</reference>
<reference key="8">
    <citation type="journal article" date="2010" name="Cell">
        <title>A tissue-specific atlas of mouse protein phosphorylation and expression.</title>
        <authorList>
            <person name="Huttlin E.L."/>
            <person name="Jedrychowski M.P."/>
            <person name="Elias J.E."/>
            <person name="Goswami T."/>
            <person name="Rad R."/>
            <person name="Beausoleil S.A."/>
            <person name="Villen J."/>
            <person name="Haas W."/>
            <person name="Sowa M.E."/>
            <person name="Gygi S.P."/>
        </authorList>
    </citation>
    <scope>PHOSPHORYLATION [LARGE SCALE ANALYSIS] AT SER-53; SER-106 AND SER-521</scope>
    <scope>IDENTIFICATION BY MASS SPECTROMETRY [LARGE SCALE ANALYSIS]</scope>
    <source>
        <tissue>Brain</tissue>
        <tissue>Brown adipose tissue</tissue>
        <tissue>Heart</tissue>
        <tissue>Kidney</tissue>
        <tissue>Liver</tissue>
        <tissue>Lung</tissue>
        <tissue>Pancreas</tissue>
        <tissue>Spleen</tissue>
        <tissue>Testis</tissue>
    </source>
</reference>
<reference key="9">
    <citation type="journal article" date="2013" name="Mol. Cell">
        <title>SIRT5-mediated lysine desuccinylation impacts diverse metabolic pathways.</title>
        <authorList>
            <person name="Park J."/>
            <person name="Chen Y."/>
            <person name="Tishkoff D.X."/>
            <person name="Peng C."/>
            <person name="Tan M."/>
            <person name="Dai L."/>
            <person name="Xie Z."/>
            <person name="Zhang Y."/>
            <person name="Zwaans B.M."/>
            <person name="Skinner M.E."/>
            <person name="Lombard D.B."/>
            <person name="Zhao Y."/>
        </authorList>
    </citation>
    <scope>ACETYLATION [LARGE SCALE ANALYSIS] AT LYS-498; LYS-531 AND LYS-539</scope>
    <scope>SUCCINYLATION [LARGE SCALE ANALYSIS] AT LYS-161; LYS-167; LYS-230; LYS-239; LYS-261; LYS-305; LYS-427; LYS-498; LYS-506; LYS-531 AND LYS-539</scope>
    <scope>IDENTIFICATION BY MASS SPECTROMETRY [LARGE SCALE ANALYSIS]</scope>
    <source>
        <tissue>Embryonic fibroblast</tissue>
        <tissue>Liver</tissue>
    </source>
</reference>
<reference key="10">
    <citation type="journal article" date="2013" name="Proc. Natl. Acad. Sci. U.S.A.">
        <title>Label-free quantitative proteomics of the lysine acetylome in mitochondria identifies substrates of SIRT3 in metabolic pathways.</title>
        <authorList>
            <person name="Rardin M.J."/>
            <person name="Newman J.C."/>
            <person name="Held J.M."/>
            <person name="Cusack M.P."/>
            <person name="Sorensen D.J."/>
            <person name="Li B."/>
            <person name="Schilling B."/>
            <person name="Mooney S.D."/>
            <person name="Kahn C.R."/>
            <person name="Verdin E."/>
            <person name="Gibson B.W."/>
        </authorList>
    </citation>
    <scope>ACETYLATION [LARGE SCALE ANALYSIS] AT LYS-123; LYS-126; LYS-132; LYS-161; LYS-167; LYS-230; LYS-239; LYS-240; LYS-261; LYS-305; LYS-427; LYS-434; LYS-498; LYS-506; LYS-531; LYS-539 AND LYS-541</scope>
    <scope>IDENTIFICATION BY MASS SPECTROMETRY [LARGE SCALE ANALYSIS]</scope>
    <source>
        <tissue>Liver</tissue>
    </source>
</reference>
<reference key="11">
    <citation type="journal article" date="2014" name="Mol. Cell. Proteomics">
        <title>Immunoaffinity enrichment and mass spectrometry analysis of protein methylation.</title>
        <authorList>
            <person name="Guo A."/>
            <person name="Gu H."/>
            <person name="Zhou J."/>
            <person name="Mulhern D."/>
            <person name="Wang Y."/>
            <person name="Lee K.A."/>
            <person name="Yang V."/>
            <person name="Aguiar M."/>
            <person name="Kornhauser J."/>
            <person name="Jia X."/>
            <person name="Ren J."/>
            <person name="Beausoleil S.A."/>
            <person name="Silva J.C."/>
            <person name="Vemulapalli V."/>
            <person name="Bedford M.T."/>
            <person name="Comb M.J."/>
        </authorList>
    </citation>
    <scope>METHYLATION [LARGE SCALE ANALYSIS] AT ARG-204</scope>
    <scope>IDENTIFICATION BY MASS SPECTROMETRY [LARGE SCALE ANALYSIS]</scope>
    <source>
        <tissue>Brain</tissue>
    </source>
</reference>